<accession>Q0AEH7</accession>
<gene>
    <name evidence="1" type="primary">frr</name>
    <name type="ordered locus">Neut_2032</name>
</gene>
<dbReference type="EMBL" id="CP000450">
    <property type="protein sequence ID" value="ABI60255.1"/>
    <property type="molecule type" value="Genomic_DNA"/>
</dbReference>
<dbReference type="RefSeq" id="WP_011635052.1">
    <property type="nucleotide sequence ID" value="NC_008344.1"/>
</dbReference>
<dbReference type="SMR" id="Q0AEH7"/>
<dbReference type="STRING" id="335283.Neut_2032"/>
<dbReference type="KEGG" id="net:Neut_2032"/>
<dbReference type="eggNOG" id="COG0233">
    <property type="taxonomic scope" value="Bacteria"/>
</dbReference>
<dbReference type="HOGENOM" id="CLU_073981_2_1_4"/>
<dbReference type="OrthoDB" id="9804006at2"/>
<dbReference type="Proteomes" id="UP000001966">
    <property type="component" value="Chromosome"/>
</dbReference>
<dbReference type="GO" id="GO:0005829">
    <property type="term" value="C:cytosol"/>
    <property type="evidence" value="ECO:0007669"/>
    <property type="project" value="GOC"/>
</dbReference>
<dbReference type="GO" id="GO:0043023">
    <property type="term" value="F:ribosomal large subunit binding"/>
    <property type="evidence" value="ECO:0007669"/>
    <property type="project" value="TreeGrafter"/>
</dbReference>
<dbReference type="GO" id="GO:0002184">
    <property type="term" value="P:cytoplasmic translational termination"/>
    <property type="evidence" value="ECO:0007669"/>
    <property type="project" value="TreeGrafter"/>
</dbReference>
<dbReference type="CDD" id="cd00520">
    <property type="entry name" value="RRF"/>
    <property type="match status" value="1"/>
</dbReference>
<dbReference type="FunFam" id="1.10.132.20:FF:000001">
    <property type="entry name" value="Ribosome-recycling factor"/>
    <property type="match status" value="1"/>
</dbReference>
<dbReference type="FunFam" id="3.30.1360.40:FF:000001">
    <property type="entry name" value="Ribosome-recycling factor"/>
    <property type="match status" value="1"/>
</dbReference>
<dbReference type="Gene3D" id="3.30.1360.40">
    <property type="match status" value="1"/>
</dbReference>
<dbReference type="Gene3D" id="1.10.132.20">
    <property type="entry name" value="Ribosome-recycling factor"/>
    <property type="match status" value="1"/>
</dbReference>
<dbReference type="HAMAP" id="MF_00040">
    <property type="entry name" value="RRF"/>
    <property type="match status" value="1"/>
</dbReference>
<dbReference type="InterPro" id="IPR002661">
    <property type="entry name" value="Ribosome_recyc_fac"/>
</dbReference>
<dbReference type="InterPro" id="IPR023584">
    <property type="entry name" value="Ribosome_recyc_fac_dom"/>
</dbReference>
<dbReference type="InterPro" id="IPR036191">
    <property type="entry name" value="RRF_sf"/>
</dbReference>
<dbReference type="NCBIfam" id="TIGR00496">
    <property type="entry name" value="frr"/>
    <property type="match status" value="1"/>
</dbReference>
<dbReference type="PANTHER" id="PTHR20982:SF3">
    <property type="entry name" value="MITOCHONDRIAL RIBOSOME RECYCLING FACTOR PSEUDO 1"/>
    <property type="match status" value="1"/>
</dbReference>
<dbReference type="PANTHER" id="PTHR20982">
    <property type="entry name" value="RIBOSOME RECYCLING FACTOR"/>
    <property type="match status" value="1"/>
</dbReference>
<dbReference type="Pfam" id="PF01765">
    <property type="entry name" value="RRF"/>
    <property type="match status" value="1"/>
</dbReference>
<dbReference type="SUPFAM" id="SSF55194">
    <property type="entry name" value="Ribosome recycling factor, RRF"/>
    <property type="match status" value="1"/>
</dbReference>
<evidence type="ECO:0000255" key="1">
    <source>
        <dbReference type="HAMAP-Rule" id="MF_00040"/>
    </source>
</evidence>
<protein>
    <recommendedName>
        <fullName evidence="1">Ribosome-recycling factor</fullName>
        <shortName evidence="1">RRF</shortName>
    </recommendedName>
    <alternativeName>
        <fullName evidence="1">Ribosome-releasing factor</fullName>
    </alternativeName>
</protein>
<reference key="1">
    <citation type="journal article" date="2007" name="Environ. Microbiol.">
        <title>Whole-genome analysis of the ammonia-oxidizing bacterium, Nitrosomonas eutropha C91: implications for niche adaptation.</title>
        <authorList>
            <person name="Stein L.Y."/>
            <person name="Arp D.J."/>
            <person name="Berube P.M."/>
            <person name="Chain P.S."/>
            <person name="Hauser L."/>
            <person name="Jetten M.S."/>
            <person name="Klotz M.G."/>
            <person name="Larimer F.W."/>
            <person name="Norton J.M."/>
            <person name="Op den Camp H.J.M."/>
            <person name="Shin M."/>
            <person name="Wei X."/>
        </authorList>
    </citation>
    <scope>NUCLEOTIDE SEQUENCE [LARGE SCALE GENOMIC DNA]</scope>
    <source>
        <strain>DSM 101675 / C91 / Nm57</strain>
    </source>
</reference>
<feature type="chain" id="PRO_1000003210" description="Ribosome-recycling factor">
    <location>
        <begin position="1"/>
        <end position="185"/>
    </location>
</feature>
<name>RRF_NITEC</name>
<keyword id="KW-0963">Cytoplasm</keyword>
<keyword id="KW-0648">Protein biosynthesis</keyword>
<comment type="function">
    <text evidence="1">Responsible for the release of ribosomes from messenger RNA at the termination of protein biosynthesis. May increase the efficiency of translation by recycling ribosomes from one round of translation to another.</text>
</comment>
<comment type="subcellular location">
    <subcellularLocation>
        <location evidence="1">Cytoplasm</location>
    </subcellularLocation>
</comment>
<comment type="similarity">
    <text evidence="1">Belongs to the RRF family.</text>
</comment>
<sequence length="185" mass="20984">MIADIKKATEQKMQKSLDALKVDFSKVRSGRPHTGLLDHITVDYYGTPTPIRQLANVTLADARTIGVIPWDKKAFSAIEKAIRDSDMGLNPMTAGEMVRVPMPPLTEERRKDLTKIVRTEAETARIAMRNIRRDANTQLKELLKDKLIAEDEDRRAQDDIQKLTDRYIAEVDKLLQAKEAELMAV</sequence>
<proteinExistence type="inferred from homology"/>
<organism>
    <name type="scientific">Nitrosomonas eutropha (strain DSM 101675 / C91 / Nm57)</name>
    <dbReference type="NCBI Taxonomy" id="335283"/>
    <lineage>
        <taxon>Bacteria</taxon>
        <taxon>Pseudomonadati</taxon>
        <taxon>Pseudomonadota</taxon>
        <taxon>Betaproteobacteria</taxon>
        <taxon>Nitrosomonadales</taxon>
        <taxon>Nitrosomonadaceae</taxon>
        <taxon>Nitrosomonas</taxon>
    </lineage>
</organism>